<accession>Q4ZVE9</accession>
<gene>
    <name type="ordered locus">Psyr_1826</name>
</gene>
<sequence>MMKGGMAGLMKQAQQMQEKMAKMQEELANAEVTGQSGAGLVSVVMTGRHDVKRINLDDSLMQEDKEVLEDLIAAAVNDAVRKIEQASQDKTASMTAGMQLPPGMKLPF</sequence>
<comment type="function">
    <text evidence="1">Binds to DNA and alters its conformation. May be involved in regulation of gene expression, nucleoid organization and DNA protection.</text>
</comment>
<comment type="subunit">
    <text evidence="1">Homodimer.</text>
</comment>
<comment type="subcellular location">
    <subcellularLocation>
        <location evidence="1">Cytoplasm</location>
        <location evidence="1">Nucleoid</location>
    </subcellularLocation>
</comment>
<comment type="similarity">
    <text evidence="1">Belongs to the YbaB/EbfC family.</text>
</comment>
<evidence type="ECO:0000255" key="1">
    <source>
        <dbReference type="HAMAP-Rule" id="MF_00274"/>
    </source>
</evidence>
<evidence type="ECO:0000256" key="2">
    <source>
        <dbReference type="SAM" id="MobiDB-lite"/>
    </source>
</evidence>
<dbReference type="EMBL" id="CP000075">
    <property type="protein sequence ID" value="AAY36873.1"/>
    <property type="molecule type" value="Genomic_DNA"/>
</dbReference>
<dbReference type="RefSeq" id="WP_002552818.1">
    <property type="nucleotide sequence ID" value="NC_007005.1"/>
</dbReference>
<dbReference type="RefSeq" id="YP_234911.1">
    <property type="nucleotide sequence ID" value="NC_007005.1"/>
</dbReference>
<dbReference type="SMR" id="Q4ZVE9"/>
<dbReference type="STRING" id="205918.Psyr_1826"/>
<dbReference type="KEGG" id="psb:Psyr_1826"/>
<dbReference type="PATRIC" id="fig|205918.7.peg.1870"/>
<dbReference type="eggNOG" id="COG0718">
    <property type="taxonomic scope" value="Bacteria"/>
</dbReference>
<dbReference type="HOGENOM" id="CLU_140930_0_0_6"/>
<dbReference type="OrthoDB" id="9808738at2"/>
<dbReference type="Proteomes" id="UP000000426">
    <property type="component" value="Chromosome"/>
</dbReference>
<dbReference type="GO" id="GO:0043590">
    <property type="term" value="C:bacterial nucleoid"/>
    <property type="evidence" value="ECO:0007669"/>
    <property type="project" value="UniProtKB-UniRule"/>
</dbReference>
<dbReference type="GO" id="GO:0005829">
    <property type="term" value="C:cytosol"/>
    <property type="evidence" value="ECO:0007669"/>
    <property type="project" value="TreeGrafter"/>
</dbReference>
<dbReference type="GO" id="GO:0003677">
    <property type="term" value="F:DNA binding"/>
    <property type="evidence" value="ECO:0007669"/>
    <property type="project" value="UniProtKB-UniRule"/>
</dbReference>
<dbReference type="FunFam" id="3.30.1310.10:FF:000001">
    <property type="entry name" value="Nucleoid-associated protein YbaB"/>
    <property type="match status" value="1"/>
</dbReference>
<dbReference type="Gene3D" id="3.30.1310.10">
    <property type="entry name" value="Nucleoid-associated protein YbaB-like domain"/>
    <property type="match status" value="1"/>
</dbReference>
<dbReference type="HAMAP" id="MF_00274">
    <property type="entry name" value="DNA_YbaB_EbfC"/>
    <property type="match status" value="1"/>
</dbReference>
<dbReference type="InterPro" id="IPR036894">
    <property type="entry name" value="YbaB-like_sf"/>
</dbReference>
<dbReference type="InterPro" id="IPR004401">
    <property type="entry name" value="YbaB/EbfC"/>
</dbReference>
<dbReference type="NCBIfam" id="TIGR00103">
    <property type="entry name" value="DNA_YbaB_EbfC"/>
    <property type="match status" value="1"/>
</dbReference>
<dbReference type="PANTHER" id="PTHR33449">
    <property type="entry name" value="NUCLEOID-ASSOCIATED PROTEIN YBAB"/>
    <property type="match status" value="1"/>
</dbReference>
<dbReference type="PANTHER" id="PTHR33449:SF1">
    <property type="entry name" value="NUCLEOID-ASSOCIATED PROTEIN YBAB"/>
    <property type="match status" value="1"/>
</dbReference>
<dbReference type="Pfam" id="PF02575">
    <property type="entry name" value="YbaB_DNA_bd"/>
    <property type="match status" value="1"/>
</dbReference>
<dbReference type="PIRSF" id="PIRSF004555">
    <property type="entry name" value="UCP004555"/>
    <property type="match status" value="1"/>
</dbReference>
<dbReference type="SUPFAM" id="SSF82607">
    <property type="entry name" value="YbaB-like"/>
    <property type="match status" value="1"/>
</dbReference>
<organism>
    <name type="scientific">Pseudomonas syringae pv. syringae (strain B728a)</name>
    <dbReference type="NCBI Taxonomy" id="205918"/>
    <lineage>
        <taxon>Bacteria</taxon>
        <taxon>Pseudomonadati</taxon>
        <taxon>Pseudomonadota</taxon>
        <taxon>Gammaproteobacteria</taxon>
        <taxon>Pseudomonadales</taxon>
        <taxon>Pseudomonadaceae</taxon>
        <taxon>Pseudomonas</taxon>
        <taxon>Pseudomonas syringae</taxon>
    </lineage>
</organism>
<protein>
    <recommendedName>
        <fullName evidence="1">Nucleoid-associated protein Psyr_1826</fullName>
    </recommendedName>
</protein>
<keyword id="KW-0963">Cytoplasm</keyword>
<keyword id="KW-0238">DNA-binding</keyword>
<name>Y1826_PSEU2</name>
<proteinExistence type="inferred from homology"/>
<reference key="1">
    <citation type="journal article" date="2005" name="Proc. Natl. Acad. Sci. U.S.A.">
        <title>Comparison of the complete genome sequences of Pseudomonas syringae pv. syringae B728a and pv. tomato DC3000.</title>
        <authorList>
            <person name="Feil H."/>
            <person name="Feil W.S."/>
            <person name="Chain P."/>
            <person name="Larimer F."/>
            <person name="Dibartolo G."/>
            <person name="Copeland A."/>
            <person name="Lykidis A."/>
            <person name="Trong S."/>
            <person name="Nolan M."/>
            <person name="Goltsman E."/>
            <person name="Thiel J."/>
            <person name="Malfatti S."/>
            <person name="Loper J.E."/>
            <person name="Lapidus A."/>
            <person name="Detter J.C."/>
            <person name="Land M."/>
            <person name="Richardson P.M."/>
            <person name="Kyrpides N.C."/>
            <person name="Ivanova N."/>
            <person name="Lindow S.E."/>
        </authorList>
    </citation>
    <scope>NUCLEOTIDE SEQUENCE [LARGE SCALE GENOMIC DNA]</scope>
    <source>
        <strain>B728a</strain>
    </source>
</reference>
<feature type="chain" id="PRO_1000003803" description="Nucleoid-associated protein Psyr_1826">
    <location>
        <begin position="1"/>
        <end position="108"/>
    </location>
</feature>
<feature type="region of interest" description="Disordered" evidence="2">
    <location>
        <begin position="85"/>
        <end position="108"/>
    </location>
</feature>
<feature type="compositionally biased region" description="Polar residues" evidence="2">
    <location>
        <begin position="85"/>
        <end position="96"/>
    </location>
</feature>